<organism>
    <name type="scientific">Francisella tularensis subsp. holarctica (strain LVS)</name>
    <dbReference type="NCBI Taxonomy" id="376619"/>
    <lineage>
        <taxon>Bacteria</taxon>
        <taxon>Pseudomonadati</taxon>
        <taxon>Pseudomonadota</taxon>
        <taxon>Gammaproteobacteria</taxon>
        <taxon>Thiotrichales</taxon>
        <taxon>Francisellaceae</taxon>
        <taxon>Francisella</taxon>
    </lineage>
</organism>
<gene>
    <name evidence="1" type="primary">glpK</name>
    <name type="ordered locus">FTL_1644</name>
</gene>
<proteinExistence type="inferred from homology"/>
<keyword id="KW-0067">ATP-binding</keyword>
<keyword id="KW-0319">Glycerol metabolism</keyword>
<keyword id="KW-0418">Kinase</keyword>
<keyword id="KW-0547">Nucleotide-binding</keyword>
<keyword id="KW-1185">Reference proteome</keyword>
<keyword id="KW-0808">Transferase</keyword>
<sequence length="502" mass="55818">MSKDFILAIDQGTTSSRAIIFDKKGNIRKIAQKEFTQIYPKSGWVEHDAMEIWGTQSGVMREALEFGRVKPDQIAAIGITNQRETVVVWDKETGDPVYNAIVWQCRRTSSICDEIKRDPQFVKYIKENTGLVVDAYFSGTKVKWILDNVEGAREKANAGKLLMGTIDTWLIWNLTRGKVHATDYSNASRTMLFNINSLEWDKKILDYLNIPESMLPEVKNSSEVFGVTDSHTLGGAEIPIAGVAGDQHAALFGHCCFEKGMAKNTYGTGCFALMNVGDKPVYSDEGLLTTIAWAENGKPTYALEGSIFIVGAVIQWIRDGLGLVRSAEDSEYYATKIDSTNGVYLVPAFVGLGTPYWDMYARGTIVGITRDTKREHIIRAALEAIAYQAKDVLECMKEDTGLDLAGLRVDGGAVQNNFLMQFQSDILQSEISKPKINEITSLGAVFLAGLAVGFWKDKQELKSILTTEKVFEPQKDSQAVAHDYRGWKKAVERSKAWAECYS</sequence>
<reference key="1">
    <citation type="submission" date="2006-03" db="EMBL/GenBank/DDBJ databases">
        <title>Complete genome sequence of Francisella tularensis LVS (Live Vaccine Strain).</title>
        <authorList>
            <person name="Chain P."/>
            <person name="Larimer F."/>
            <person name="Land M."/>
            <person name="Stilwagen S."/>
            <person name="Larsson P."/>
            <person name="Bearden S."/>
            <person name="Chu M."/>
            <person name="Oyston P."/>
            <person name="Forsman M."/>
            <person name="Andersson S."/>
            <person name="Lindler L."/>
            <person name="Titball R."/>
            <person name="Garcia E."/>
        </authorList>
    </citation>
    <scope>NUCLEOTIDE SEQUENCE [LARGE SCALE GENOMIC DNA]</scope>
    <source>
        <strain>LVS</strain>
    </source>
</reference>
<dbReference type="EC" id="2.7.1.30" evidence="1"/>
<dbReference type="EMBL" id="AM233362">
    <property type="protein sequence ID" value="CAJ80083.1"/>
    <property type="molecule type" value="Genomic_DNA"/>
</dbReference>
<dbReference type="RefSeq" id="WP_003017064.1">
    <property type="nucleotide sequence ID" value="NZ_CP009694.1"/>
</dbReference>
<dbReference type="SMR" id="Q2A1W9"/>
<dbReference type="KEGG" id="ftl:FTL_1644"/>
<dbReference type="UniPathway" id="UPA00618">
    <property type="reaction ID" value="UER00672"/>
</dbReference>
<dbReference type="Proteomes" id="UP000001944">
    <property type="component" value="Chromosome"/>
</dbReference>
<dbReference type="GO" id="GO:0005829">
    <property type="term" value="C:cytosol"/>
    <property type="evidence" value="ECO:0007669"/>
    <property type="project" value="TreeGrafter"/>
</dbReference>
<dbReference type="GO" id="GO:0005524">
    <property type="term" value="F:ATP binding"/>
    <property type="evidence" value="ECO:0007669"/>
    <property type="project" value="UniProtKB-UniRule"/>
</dbReference>
<dbReference type="GO" id="GO:0004370">
    <property type="term" value="F:glycerol kinase activity"/>
    <property type="evidence" value="ECO:0000250"/>
    <property type="project" value="UniProtKB"/>
</dbReference>
<dbReference type="GO" id="GO:0019563">
    <property type="term" value="P:glycerol catabolic process"/>
    <property type="evidence" value="ECO:0007669"/>
    <property type="project" value="UniProtKB-UniRule"/>
</dbReference>
<dbReference type="GO" id="GO:0006071">
    <property type="term" value="P:glycerol metabolic process"/>
    <property type="evidence" value="ECO:0000250"/>
    <property type="project" value="UniProtKB"/>
</dbReference>
<dbReference type="GO" id="GO:0006072">
    <property type="term" value="P:glycerol-3-phosphate metabolic process"/>
    <property type="evidence" value="ECO:0007669"/>
    <property type="project" value="InterPro"/>
</dbReference>
<dbReference type="CDD" id="cd07786">
    <property type="entry name" value="FGGY_EcGK_like"/>
    <property type="match status" value="1"/>
</dbReference>
<dbReference type="FunFam" id="3.30.420.40:FF:000007">
    <property type="entry name" value="Glycerol kinase"/>
    <property type="match status" value="1"/>
</dbReference>
<dbReference type="FunFam" id="3.30.420.40:FF:000008">
    <property type="entry name" value="Glycerol kinase"/>
    <property type="match status" value="1"/>
</dbReference>
<dbReference type="Gene3D" id="3.30.420.40">
    <property type="match status" value="2"/>
</dbReference>
<dbReference type="HAMAP" id="MF_00186">
    <property type="entry name" value="Glycerol_kin"/>
    <property type="match status" value="1"/>
</dbReference>
<dbReference type="InterPro" id="IPR043129">
    <property type="entry name" value="ATPase_NBD"/>
</dbReference>
<dbReference type="InterPro" id="IPR000577">
    <property type="entry name" value="Carb_kinase_FGGY"/>
</dbReference>
<dbReference type="InterPro" id="IPR018483">
    <property type="entry name" value="Carb_kinase_FGGY_CS"/>
</dbReference>
<dbReference type="InterPro" id="IPR018485">
    <property type="entry name" value="FGGY_C"/>
</dbReference>
<dbReference type="InterPro" id="IPR018484">
    <property type="entry name" value="FGGY_N"/>
</dbReference>
<dbReference type="InterPro" id="IPR005999">
    <property type="entry name" value="Glycerol_kin"/>
</dbReference>
<dbReference type="NCBIfam" id="TIGR01311">
    <property type="entry name" value="glycerol_kin"/>
    <property type="match status" value="1"/>
</dbReference>
<dbReference type="NCBIfam" id="NF000756">
    <property type="entry name" value="PRK00047.1"/>
    <property type="match status" value="1"/>
</dbReference>
<dbReference type="PANTHER" id="PTHR10196:SF69">
    <property type="entry name" value="GLYCEROL KINASE"/>
    <property type="match status" value="1"/>
</dbReference>
<dbReference type="PANTHER" id="PTHR10196">
    <property type="entry name" value="SUGAR KINASE"/>
    <property type="match status" value="1"/>
</dbReference>
<dbReference type="Pfam" id="PF02782">
    <property type="entry name" value="FGGY_C"/>
    <property type="match status" value="1"/>
</dbReference>
<dbReference type="Pfam" id="PF00370">
    <property type="entry name" value="FGGY_N"/>
    <property type="match status" value="1"/>
</dbReference>
<dbReference type="PIRSF" id="PIRSF000538">
    <property type="entry name" value="GlpK"/>
    <property type="match status" value="1"/>
</dbReference>
<dbReference type="SUPFAM" id="SSF53067">
    <property type="entry name" value="Actin-like ATPase domain"/>
    <property type="match status" value="2"/>
</dbReference>
<dbReference type="PROSITE" id="PS00933">
    <property type="entry name" value="FGGY_KINASES_1"/>
    <property type="match status" value="1"/>
</dbReference>
<dbReference type="PROSITE" id="PS00445">
    <property type="entry name" value="FGGY_KINASES_2"/>
    <property type="match status" value="1"/>
</dbReference>
<evidence type="ECO:0000255" key="1">
    <source>
        <dbReference type="HAMAP-Rule" id="MF_00186"/>
    </source>
</evidence>
<accession>Q2A1W9</accession>
<protein>
    <recommendedName>
        <fullName evidence="1">Glycerol kinase</fullName>
        <ecNumber evidence="1">2.7.1.30</ecNumber>
    </recommendedName>
    <alternativeName>
        <fullName evidence="1">ATP:glycerol 3-phosphotransferase</fullName>
    </alternativeName>
    <alternativeName>
        <fullName evidence="1">Glycerokinase</fullName>
        <shortName evidence="1">GK</shortName>
    </alternativeName>
</protein>
<name>GLPK_FRATH</name>
<comment type="function">
    <text evidence="1">Key enzyme in the regulation of glycerol uptake and metabolism. Catalyzes the phosphorylation of glycerol to yield sn-glycerol 3-phosphate.</text>
</comment>
<comment type="catalytic activity">
    <reaction evidence="1">
        <text>glycerol + ATP = sn-glycerol 3-phosphate + ADP + H(+)</text>
        <dbReference type="Rhea" id="RHEA:21644"/>
        <dbReference type="ChEBI" id="CHEBI:15378"/>
        <dbReference type="ChEBI" id="CHEBI:17754"/>
        <dbReference type="ChEBI" id="CHEBI:30616"/>
        <dbReference type="ChEBI" id="CHEBI:57597"/>
        <dbReference type="ChEBI" id="CHEBI:456216"/>
        <dbReference type="EC" id="2.7.1.30"/>
    </reaction>
</comment>
<comment type="activity regulation">
    <text evidence="1">Inhibited by fructose 1,6-bisphosphate (FBP).</text>
</comment>
<comment type="pathway">
    <text evidence="1">Polyol metabolism; glycerol degradation via glycerol kinase pathway; sn-glycerol 3-phosphate from glycerol: step 1/1.</text>
</comment>
<comment type="similarity">
    <text evidence="1">Belongs to the FGGY kinase family.</text>
</comment>
<feature type="chain" id="PRO_1000058449" description="Glycerol kinase">
    <location>
        <begin position="1"/>
        <end position="502"/>
    </location>
</feature>
<feature type="binding site" evidence="1">
    <location>
        <position position="13"/>
    </location>
    <ligand>
        <name>ADP</name>
        <dbReference type="ChEBI" id="CHEBI:456216"/>
    </ligand>
</feature>
<feature type="binding site" evidence="1">
    <location>
        <position position="13"/>
    </location>
    <ligand>
        <name>ATP</name>
        <dbReference type="ChEBI" id="CHEBI:30616"/>
    </ligand>
</feature>
<feature type="binding site" evidence="1">
    <location>
        <position position="13"/>
    </location>
    <ligand>
        <name>sn-glycerol 3-phosphate</name>
        <dbReference type="ChEBI" id="CHEBI:57597"/>
    </ligand>
</feature>
<feature type="binding site" evidence="1">
    <location>
        <position position="14"/>
    </location>
    <ligand>
        <name>ATP</name>
        <dbReference type="ChEBI" id="CHEBI:30616"/>
    </ligand>
</feature>
<feature type="binding site" evidence="1">
    <location>
        <position position="15"/>
    </location>
    <ligand>
        <name>ATP</name>
        <dbReference type="ChEBI" id="CHEBI:30616"/>
    </ligand>
</feature>
<feature type="binding site" evidence="1">
    <location>
        <position position="17"/>
    </location>
    <ligand>
        <name>ADP</name>
        <dbReference type="ChEBI" id="CHEBI:456216"/>
    </ligand>
</feature>
<feature type="binding site" evidence="1">
    <location>
        <position position="83"/>
    </location>
    <ligand>
        <name>glycerol</name>
        <dbReference type="ChEBI" id="CHEBI:17754"/>
    </ligand>
</feature>
<feature type="binding site" evidence="1">
    <location>
        <position position="83"/>
    </location>
    <ligand>
        <name>sn-glycerol 3-phosphate</name>
        <dbReference type="ChEBI" id="CHEBI:57597"/>
    </ligand>
</feature>
<feature type="binding site" evidence="1">
    <location>
        <position position="84"/>
    </location>
    <ligand>
        <name>glycerol</name>
        <dbReference type="ChEBI" id="CHEBI:17754"/>
    </ligand>
</feature>
<feature type="binding site" evidence="1">
    <location>
        <position position="84"/>
    </location>
    <ligand>
        <name>sn-glycerol 3-phosphate</name>
        <dbReference type="ChEBI" id="CHEBI:57597"/>
    </ligand>
</feature>
<feature type="binding site" evidence="1">
    <location>
        <position position="136"/>
    </location>
    <ligand>
        <name>glycerol</name>
        <dbReference type="ChEBI" id="CHEBI:17754"/>
    </ligand>
</feature>
<feature type="binding site" evidence="1">
    <location>
        <position position="136"/>
    </location>
    <ligand>
        <name>sn-glycerol 3-phosphate</name>
        <dbReference type="ChEBI" id="CHEBI:57597"/>
    </ligand>
</feature>
<feature type="binding site" evidence="1">
    <location>
        <position position="246"/>
    </location>
    <ligand>
        <name>glycerol</name>
        <dbReference type="ChEBI" id="CHEBI:17754"/>
    </ligand>
</feature>
<feature type="binding site" evidence="1">
    <location>
        <position position="246"/>
    </location>
    <ligand>
        <name>sn-glycerol 3-phosphate</name>
        <dbReference type="ChEBI" id="CHEBI:57597"/>
    </ligand>
</feature>
<feature type="binding site" evidence="1">
    <location>
        <position position="247"/>
    </location>
    <ligand>
        <name>glycerol</name>
        <dbReference type="ChEBI" id="CHEBI:17754"/>
    </ligand>
</feature>
<feature type="binding site" evidence="1">
    <location>
        <position position="268"/>
    </location>
    <ligand>
        <name>ADP</name>
        <dbReference type="ChEBI" id="CHEBI:456216"/>
    </ligand>
</feature>
<feature type="binding site" evidence="1">
    <location>
        <position position="268"/>
    </location>
    <ligand>
        <name>ATP</name>
        <dbReference type="ChEBI" id="CHEBI:30616"/>
    </ligand>
</feature>
<feature type="binding site" evidence="1">
    <location>
        <position position="311"/>
    </location>
    <ligand>
        <name>ADP</name>
        <dbReference type="ChEBI" id="CHEBI:456216"/>
    </ligand>
</feature>
<feature type="binding site" evidence="1">
    <location>
        <position position="311"/>
    </location>
    <ligand>
        <name>ATP</name>
        <dbReference type="ChEBI" id="CHEBI:30616"/>
    </ligand>
</feature>
<feature type="binding site" evidence="1">
    <location>
        <position position="315"/>
    </location>
    <ligand>
        <name>ATP</name>
        <dbReference type="ChEBI" id="CHEBI:30616"/>
    </ligand>
</feature>
<feature type="binding site" evidence="1">
    <location>
        <position position="412"/>
    </location>
    <ligand>
        <name>ADP</name>
        <dbReference type="ChEBI" id="CHEBI:456216"/>
    </ligand>
</feature>
<feature type="binding site" evidence="1">
    <location>
        <position position="412"/>
    </location>
    <ligand>
        <name>ATP</name>
        <dbReference type="ChEBI" id="CHEBI:30616"/>
    </ligand>
</feature>
<feature type="binding site" evidence="1">
    <location>
        <position position="416"/>
    </location>
    <ligand>
        <name>ADP</name>
        <dbReference type="ChEBI" id="CHEBI:456216"/>
    </ligand>
</feature>